<evidence type="ECO:0000255" key="1">
    <source>
        <dbReference type="HAMAP-Rule" id="MF_00143"/>
    </source>
</evidence>
<protein>
    <recommendedName>
        <fullName evidence="1">UPF0114 protein PST_0950</fullName>
    </recommendedName>
</protein>
<gene>
    <name type="ordered locus">PST_0950</name>
</gene>
<name>Y950_STUS1</name>
<reference key="1">
    <citation type="journal article" date="2008" name="Proc. Natl. Acad. Sci. U.S.A.">
        <title>Nitrogen fixation island and rhizosphere competence traits in the genome of root-associated Pseudomonas stutzeri A1501.</title>
        <authorList>
            <person name="Yan Y."/>
            <person name="Yang J."/>
            <person name="Dou Y."/>
            <person name="Chen M."/>
            <person name="Ping S."/>
            <person name="Peng J."/>
            <person name="Lu W."/>
            <person name="Zhang W."/>
            <person name="Yao Z."/>
            <person name="Li H."/>
            <person name="Liu W."/>
            <person name="He S."/>
            <person name="Geng L."/>
            <person name="Zhang X."/>
            <person name="Yang F."/>
            <person name="Yu H."/>
            <person name="Zhan Y."/>
            <person name="Li D."/>
            <person name="Lin Z."/>
            <person name="Wang Y."/>
            <person name="Elmerich C."/>
            <person name="Lin M."/>
            <person name="Jin Q."/>
        </authorList>
    </citation>
    <scope>NUCLEOTIDE SEQUENCE [LARGE SCALE GENOMIC DNA]</scope>
    <source>
        <strain>A1501</strain>
    </source>
</reference>
<sequence length="162" mass="18309">MERILENAMYAARWLLAPIYFGLAFALLALAIKFFQEIFHILPMILSISEADLVLTLLSLIDMALVGGLLVMVMISGYENFVSQLDVDEGKEKLDWLGKMDSSSLKLKVAASIVAISSIHLLRMFMDVQQIDSEKLMWYVIIHLTFVVSAFAMGYMDKITKH</sequence>
<proteinExistence type="inferred from homology"/>
<feature type="chain" id="PRO_1000009487" description="UPF0114 protein PST_0950">
    <location>
        <begin position="1"/>
        <end position="162"/>
    </location>
</feature>
<feature type="transmembrane region" description="Helical" evidence="1">
    <location>
        <begin position="15"/>
        <end position="35"/>
    </location>
</feature>
<feature type="transmembrane region" description="Helical" evidence="1">
    <location>
        <begin position="53"/>
        <end position="73"/>
    </location>
</feature>
<feature type="transmembrane region" description="Helical" evidence="1">
    <location>
        <begin position="136"/>
        <end position="156"/>
    </location>
</feature>
<comment type="subcellular location">
    <subcellularLocation>
        <location evidence="1">Cell membrane</location>
        <topology evidence="1">Multi-pass membrane protein</topology>
    </subcellularLocation>
</comment>
<comment type="similarity">
    <text evidence="1">Belongs to the UPF0114 family.</text>
</comment>
<dbReference type="EMBL" id="CP000304">
    <property type="protein sequence ID" value="ABP78647.1"/>
    <property type="molecule type" value="Genomic_DNA"/>
</dbReference>
<dbReference type="RefSeq" id="WP_011912140.1">
    <property type="nucleotide sequence ID" value="NC_009434.1"/>
</dbReference>
<dbReference type="KEGG" id="psa:PST_0950"/>
<dbReference type="eggNOG" id="COG2862">
    <property type="taxonomic scope" value="Bacteria"/>
</dbReference>
<dbReference type="HOGENOM" id="CLU_097887_1_1_6"/>
<dbReference type="Proteomes" id="UP000000233">
    <property type="component" value="Chromosome"/>
</dbReference>
<dbReference type="GO" id="GO:0005886">
    <property type="term" value="C:plasma membrane"/>
    <property type="evidence" value="ECO:0007669"/>
    <property type="project" value="UniProtKB-SubCell"/>
</dbReference>
<dbReference type="HAMAP" id="MF_00143">
    <property type="entry name" value="UPF0114"/>
    <property type="match status" value="1"/>
</dbReference>
<dbReference type="InterPro" id="IPR005134">
    <property type="entry name" value="UPF0114"/>
</dbReference>
<dbReference type="InterPro" id="IPR020761">
    <property type="entry name" value="UPF0114_bac"/>
</dbReference>
<dbReference type="NCBIfam" id="TIGR00645">
    <property type="entry name" value="HI0507"/>
    <property type="match status" value="1"/>
</dbReference>
<dbReference type="PANTHER" id="PTHR38596">
    <property type="entry name" value="UPF0114 PROTEIN YQHA"/>
    <property type="match status" value="1"/>
</dbReference>
<dbReference type="PANTHER" id="PTHR38596:SF1">
    <property type="entry name" value="UPF0114 PROTEIN YQHA"/>
    <property type="match status" value="1"/>
</dbReference>
<dbReference type="Pfam" id="PF03350">
    <property type="entry name" value="UPF0114"/>
    <property type="match status" value="1"/>
</dbReference>
<organism>
    <name type="scientific">Stutzerimonas stutzeri (strain A1501)</name>
    <name type="common">Pseudomonas stutzeri</name>
    <dbReference type="NCBI Taxonomy" id="379731"/>
    <lineage>
        <taxon>Bacteria</taxon>
        <taxon>Pseudomonadati</taxon>
        <taxon>Pseudomonadota</taxon>
        <taxon>Gammaproteobacteria</taxon>
        <taxon>Pseudomonadales</taxon>
        <taxon>Pseudomonadaceae</taxon>
        <taxon>Stutzerimonas</taxon>
    </lineage>
</organism>
<accession>A4VI46</accession>
<keyword id="KW-1003">Cell membrane</keyword>
<keyword id="KW-0472">Membrane</keyword>
<keyword id="KW-1185">Reference proteome</keyword>
<keyword id="KW-0812">Transmembrane</keyword>
<keyword id="KW-1133">Transmembrane helix</keyword>